<accession>Q9DBR1</accession>
<accession>Q3TI26</accession>
<accession>Q3TKF2</accession>
<accession>Q3UZT9</accession>
<accession>Q61489</accession>
<accession>Q99KS7</accession>
<reference key="1">
    <citation type="journal article" date="1995" name="Nucleic Acids Res.">
        <title>Characterization of cDNA encoding mouse homolog of fission yeast dhp1+ gene: structural and functional conservation.</title>
        <authorList>
            <person name="Shobuike T."/>
            <person name="Sugano S."/>
            <person name="Yamashita T."/>
            <person name="Ikeda H."/>
        </authorList>
    </citation>
    <scope>NUCLEOTIDE SEQUENCE [MRNA] (ISOFORM 2)</scope>
    <scope>TISSUE SPECIFICITY</scope>
    <source>
        <tissue>Testis</tissue>
    </source>
</reference>
<reference key="2">
    <citation type="journal article" date="2005" name="Science">
        <title>The transcriptional landscape of the mammalian genome.</title>
        <authorList>
            <person name="Carninci P."/>
            <person name="Kasukawa T."/>
            <person name="Katayama S."/>
            <person name="Gough J."/>
            <person name="Frith M.C."/>
            <person name="Maeda N."/>
            <person name="Oyama R."/>
            <person name="Ravasi T."/>
            <person name="Lenhard B."/>
            <person name="Wells C."/>
            <person name="Kodzius R."/>
            <person name="Shimokawa K."/>
            <person name="Bajic V.B."/>
            <person name="Brenner S.E."/>
            <person name="Batalov S."/>
            <person name="Forrest A.R."/>
            <person name="Zavolan M."/>
            <person name="Davis M.J."/>
            <person name="Wilming L.G."/>
            <person name="Aidinis V."/>
            <person name="Allen J.E."/>
            <person name="Ambesi-Impiombato A."/>
            <person name="Apweiler R."/>
            <person name="Aturaliya R.N."/>
            <person name="Bailey T.L."/>
            <person name="Bansal M."/>
            <person name="Baxter L."/>
            <person name="Beisel K.W."/>
            <person name="Bersano T."/>
            <person name="Bono H."/>
            <person name="Chalk A.M."/>
            <person name="Chiu K.P."/>
            <person name="Choudhary V."/>
            <person name="Christoffels A."/>
            <person name="Clutterbuck D.R."/>
            <person name="Crowe M.L."/>
            <person name="Dalla E."/>
            <person name="Dalrymple B.P."/>
            <person name="de Bono B."/>
            <person name="Della Gatta G."/>
            <person name="di Bernardo D."/>
            <person name="Down T."/>
            <person name="Engstrom P."/>
            <person name="Fagiolini M."/>
            <person name="Faulkner G."/>
            <person name="Fletcher C.F."/>
            <person name="Fukushima T."/>
            <person name="Furuno M."/>
            <person name="Futaki S."/>
            <person name="Gariboldi M."/>
            <person name="Georgii-Hemming P."/>
            <person name="Gingeras T.R."/>
            <person name="Gojobori T."/>
            <person name="Green R.E."/>
            <person name="Gustincich S."/>
            <person name="Harbers M."/>
            <person name="Hayashi Y."/>
            <person name="Hensch T.K."/>
            <person name="Hirokawa N."/>
            <person name="Hill D."/>
            <person name="Huminiecki L."/>
            <person name="Iacono M."/>
            <person name="Ikeo K."/>
            <person name="Iwama A."/>
            <person name="Ishikawa T."/>
            <person name="Jakt M."/>
            <person name="Kanapin A."/>
            <person name="Katoh M."/>
            <person name="Kawasawa Y."/>
            <person name="Kelso J."/>
            <person name="Kitamura H."/>
            <person name="Kitano H."/>
            <person name="Kollias G."/>
            <person name="Krishnan S.P."/>
            <person name="Kruger A."/>
            <person name="Kummerfeld S.K."/>
            <person name="Kurochkin I.V."/>
            <person name="Lareau L.F."/>
            <person name="Lazarevic D."/>
            <person name="Lipovich L."/>
            <person name="Liu J."/>
            <person name="Liuni S."/>
            <person name="McWilliam S."/>
            <person name="Madan Babu M."/>
            <person name="Madera M."/>
            <person name="Marchionni L."/>
            <person name="Matsuda H."/>
            <person name="Matsuzawa S."/>
            <person name="Miki H."/>
            <person name="Mignone F."/>
            <person name="Miyake S."/>
            <person name="Morris K."/>
            <person name="Mottagui-Tabar S."/>
            <person name="Mulder N."/>
            <person name="Nakano N."/>
            <person name="Nakauchi H."/>
            <person name="Ng P."/>
            <person name="Nilsson R."/>
            <person name="Nishiguchi S."/>
            <person name="Nishikawa S."/>
            <person name="Nori F."/>
            <person name="Ohara O."/>
            <person name="Okazaki Y."/>
            <person name="Orlando V."/>
            <person name="Pang K.C."/>
            <person name="Pavan W.J."/>
            <person name="Pavesi G."/>
            <person name="Pesole G."/>
            <person name="Petrovsky N."/>
            <person name="Piazza S."/>
            <person name="Reed J."/>
            <person name="Reid J.F."/>
            <person name="Ring B.Z."/>
            <person name="Ringwald M."/>
            <person name="Rost B."/>
            <person name="Ruan Y."/>
            <person name="Salzberg S.L."/>
            <person name="Sandelin A."/>
            <person name="Schneider C."/>
            <person name="Schoenbach C."/>
            <person name="Sekiguchi K."/>
            <person name="Semple C.A."/>
            <person name="Seno S."/>
            <person name="Sessa L."/>
            <person name="Sheng Y."/>
            <person name="Shibata Y."/>
            <person name="Shimada H."/>
            <person name="Shimada K."/>
            <person name="Silva D."/>
            <person name="Sinclair B."/>
            <person name="Sperling S."/>
            <person name="Stupka E."/>
            <person name="Sugiura K."/>
            <person name="Sultana R."/>
            <person name="Takenaka Y."/>
            <person name="Taki K."/>
            <person name="Tammoja K."/>
            <person name="Tan S.L."/>
            <person name="Tang S."/>
            <person name="Taylor M.S."/>
            <person name="Tegner J."/>
            <person name="Teichmann S.A."/>
            <person name="Ueda H.R."/>
            <person name="van Nimwegen E."/>
            <person name="Verardo R."/>
            <person name="Wei C.L."/>
            <person name="Yagi K."/>
            <person name="Yamanishi H."/>
            <person name="Zabarovsky E."/>
            <person name="Zhu S."/>
            <person name="Zimmer A."/>
            <person name="Hide W."/>
            <person name="Bult C."/>
            <person name="Grimmond S.M."/>
            <person name="Teasdale R.D."/>
            <person name="Liu E.T."/>
            <person name="Brusic V."/>
            <person name="Quackenbush J."/>
            <person name="Wahlestedt C."/>
            <person name="Mattick J.S."/>
            <person name="Hume D.A."/>
            <person name="Kai C."/>
            <person name="Sasaki D."/>
            <person name="Tomaru Y."/>
            <person name="Fukuda S."/>
            <person name="Kanamori-Katayama M."/>
            <person name="Suzuki M."/>
            <person name="Aoki J."/>
            <person name="Arakawa T."/>
            <person name="Iida J."/>
            <person name="Imamura K."/>
            <person name="Itoh M."/>
            <person name="Kato T."/>
            <person name="Kawaji H."/>
            <person name="Kawagashira N."/>
            <person name="Kawashima T."/>
            <person name="Kojima M."/>
            <person name="Kondo S."/>
            <person name="Konno H."/>
            <person name="Nakano K."/>
            <person name="Ninomiya N."/>
            <person name="Nishio T."/>
            <person name="Okada M."/>
            <person name="Plessy C."/>
            <person name="Shibata K."/>
            <person name="Shiraki T."/>
            <person name="Suzuki S."/>
            <person name="Tagami M."/>
            <person name="Waki K."/>
            <person name="Watahiki A."/>
            <person name="Okamura-Oho Y."/>
            <person name="Suzuki H."/>
            <person name="Kawai J."/>
            <person name="Hayashizaki Y."/>
        </authorList>
    </citation>
    <scope>NUCLEOTIDE SEQUENCE [LARGE SCALE MRNA] (ISOFORM 1)</scope>
    <scope>NUCLEOTIDE SEQUENCE [LARGE SCALE MRNA] OF 1-417 (ISOFORMS 1/2)</scope>
    <source>
        <strain>C57BL/6J</strain>
        <tissue>Embryo</tissue>
        <tissue>Eye</tissue>
        <tissue>Forelimb</tissue>
        <tissue>Lung</tissue>
        <tissue>Pituitary</tissue>
    </source>
</reference>
<reference key="3">
    <citation type="journal article" date="2004" name="Genome Res.">
        <title>The status, quality, and expansion of the NIH full-length cDNA project: the Mammalian Gene Collection (MGC).</title>
        <authorList>
            <consortium name="The MGC Project Team"/>
        </authorList>
    </citation>
    <scope>NUCLEOTIDE SEQUENCE [LARGE SCALE MRNA] (ISOFORM 1)</scope>
    <source>
        <strain>C57BL/6J</strain>
        <strain>Czech II</strain>
        <tissue>Brain</tissue>
        <tissue>Mammary gland</tissue>
    </source>
</reference>
<reference key="4">
    <citation type="journal article" date="2007" name="Proc. Natl. Acad. Sci. U.S.A.">
        <title>Large-scale phosphorylation analysis of mouse liver.</title>
        <authorList>
            <person name="Villen J."/>
            <person name="Beausoleil S.A."/>
            <person name="Gerber S.A."/>
            <person name="Gygi S.P."/>
        </authorList>
    </citation>
    <scope>PHOSPHORYLATION [LARGE SCALE ANALYSIS] AT SER-448 AND SER-499</scope>
    <scope>IDENTIFICATION BY MASS SPECTROMETRY [LARGE SCALE ANALYSIS]</scope>
    <source>
        <tissue>Liver</tissue>
    </source>
</reference>
<reference key="5">
    <citation type="journal article" date="2008" name="J. Proteome Res.">
        <title>Specific phosphopeptide enrichment with immobilized titanium ion affinity chromatography adsorbent for phosphoproteome analysis.</title>
        <authorList>
            <person name="Zhou H."/>
            <person name="Ye M."/>
            <person name="Dong J."/>
            <person name="Han G."/>
            <person name="Jiang X."/>
            <person name="Wu R."/>
            <person name="Zou H."/>
        </authorList>
    </citation>
    <scope>IDENTIFICATION BY MASS SPECTROMETRY [LARGE SCALE ANALYSIS]</scope>
    <source>
        <tissue>Liver</tissue>
    </source>
</reference>
<reference key="6">
    <citation type="journal article" date="2009" name="Immunity">
        <title>The phagosomal proteome in interferon-gamma-activated macrophages.</title>
        <authorList>
            <person name="Trost M."/>
            <person name="English L."/>
            <person name="Lemieux S."/>
            <person name="Courcelles M."/>
            <person name="Desjardins M."/>
            <person name="Thibault P."/>
        </authorList>
    </citation>
    <scope>PHOSPHORYLATION [LARGE SCALE ANALYSIS] AT SER-448; SER-499 AND SER-501</scope>
    <scope>IDENTIFICATION BY MASS SPECTROMETRY [LARGE SCALE ANALYSIS]</scope>
</reference>
<reference key="7">
    <citation type="journal article" date="2009" name="Mol. Cell. Proteomics">
        <title>Large scale localization of protein phosphorylation by use of electron capture dissociation mass spectrometry.</title>
        <authorList>
            <person name="Sweet S.M."/>
            <person name="Bailey C.M."/>
            <person name="Cunningham D.L."/>
            <person name="Heath J.K."/>
            <person name="Cooper H.J."/>
        </authorList>
    </citation>
    <scope>PHOSPHORYLATION [LARGE SCALE ANALYSIS] AT SER-499 AND SER-501</scope>
    <scope>IDENTIFICATION BY MASS SPECTROMETRY [LARGE SCALE ANALYSIS]</scope>
    <source>
        <tissue>Embryonic fibroblast</tissue>
    </source>
</reference>
<reference key="8">
    <citation type="journal article" date="2010" name="Cell">
        <title>A tissue-specific atlas of mouse protein phosphorylation and expression.</title>
        <authorList>
            <person name="Huttlin E.L."/>
            <person name="Jedrychowski M.P."/>
            <person name="Elias J.E."/>
            <person name="Goswami T."/>
            <person name="Rad R."/>
            <person name="Beausoleil S.A."/>
            <person name="Villen J."/>
            <person name="Haas W."/>
            <person name="Sowa M.E."/>
            <person name="Gygi S.P."/>
        </authorList>
    </citation>
    <scope>PHOSPHORYLATION [LARGE SCALE ANALYSIS] AT SER-448; SER-471; SER-475; SER-482; SER-487; SER-499 AND SER-678</scope>
    <scope>IDENTIFICATION BY MASS SPECTROMETRY [LARGE SCALE ANALYSIS]</scope>
    <source>
        <tissue>Brain</tissue>
        <tissue>Brown adipose tissue</tissue>
        <tissue>Heart</tissue>
        <tissue>Kidney</tissue>
        <tissue>Liver</tissue>
        <tissue>Lung</tissue>
        <tissue>Pancreas</tissue>
        <tissue>Spleen</tissue>
        <tissue>Testis</tissue>
    </source>
</reference>
<reference key="9">
    <citation type="journal article" date="2013" name="Mol. Cell">
        <title>SIRT5-mediated lysine desuccinylation impacts diverse metabolic pathways.</title>
        <authorList>
            <person name="Park J."/>
            <person name="Chen Y."/>
            <person name="Tishkoff D.X."/>
            <person name="Peng C."/>
            <person name="Tan M."/>
            <person name="Dai L."/>
            <person name="Xie Z."/>
            <person name="Zhang Y."/>
            <person name="Zwaans B.M."/>
            <person name="Skinner M.E."/>
            <person name="Lombard D.B."/>
            <person name="Zhao Y."/>
        </authorList>
    </citation>
    <scope>ACETYLATION [LARGE SCALE ANALYSIS] AT LYS-286</scope>
    <scope>IDENTIFICATION BY MASS SPECTROMETRY [LARGE SCALE ANALYSIS]</scope>
    <source>
        <tissue>Embryonic fibroblast</tissue>
    </source>
</reference>
<reference key="10">
    <citation type="journal article" date="2014" name="Mol. Cell. Proteomics">
        <title>Immunoaffinity enrichment and mass spectrometry analysis of protein methylation.</title>
        <authorList>
            <person name="Guo A."/>
            <person name="Gu H."/>
            <person name="Zhou J."/>
            <person name="Mulhern D."/>
            <person name="Wang Y."/>
            <person name="Lee K.A."/>
            <person name="Yang V."/>
            <person name="Aguiar M."/>
            <person name="Kornhauser J."/>
            <person name="Jia X."/>
            <person name="Ren J."/>
            <person name="Beausoleil S.A."/>
            <person name="Silva J.C."/>
            <person name="Vemulapalli V."/>
            <person name="Bedford M.T."/>
            <person name="Comb M.J."/>
        </authorList>
    </citation>
    <scope>METHYLATION [LARGE SCALE ANALYSIS] AT ARG-847; ARG-880; ARG-883; ARG-895 AND ARG-947</scope>
    <scope>IDENTIFICATION BY MASS SPECTROMETRY [LARGE SCALE ANALYSIS]</scope>
    <source>
        <tissue>Brain</tissue>
        <tissue>Embryo</tissue>
    </source>
</reference>
<sequence>MGVPAFFRWLSRKYPSIIVNCVEEKPKECNGVKIPVDASKPNPNDVEFDNLYLDMNGIIHPCTHPEDKPAPKNEDEMMVAIFEYIDRLFNIVRPRRLLYMAIDGVAPRAKMNQQRSRRFRASKEGMEAAVEKQRVREEILAKGGFLPPEEIKERFDSNCITPGTEFMDNLAKCLRYYIADRLNNDPGWKNLTVILSDASAPGEGEHKIMDYIRRQRAQPNHDPNTHHCLCGADADLIMLGLATHEPNFTIIREEFKPNKPKPCALCNQFGHEVKDCEGLPREKKGKHDELADSLPCAEGEFIFLRLNVLREYLERELTMASLPFPFDVERSIDDWVFMCFFVGNDFLPHLPSLEIREGAIDRLVNIYKNVVHKTGGYLTESGYVNLQRVQMIMLAVGEVEDSIFKKRKDDEDSFRRRQKEKRKRMKRDQPAFTPSGILTPHALGSRNSPGCQVASNPRQAAYEMRMQRNSSPSISPNTSFASDGSPSPLGGIKRKAEDSDSEPEPEDNVRLWEAGWKQRYYKNKFDVDAADEKFRRKVVQSYVEGLCWVLRYYYQGCASWKWYYPFHYAPFASDFEGIADMSSEFEKGTKPFKPLEQLMGVFPAASGNFLPPTWRKLMSDPDSSIIDFYPEDFAIDLNGKKYAWQGVALLPFVDERRLRAALEEVYPDLTPEENRRNSLGGDVLFVGKLHPLRDFILELYQTGSTEPVDVPPELCHGIQGTFSLDEEAILPDQTVCSPVPMLRDLTQNTAVSINFKDPQFAEDYVFKAAMLPGARKPATVLKPGDWEKSSNGRQWKPQLGFNRDRRPVHLDQAAFRTLGHVTPRGSGTSVYTNTALPPANYQGNNYRPLLRGQAQIPKLMSNMRPQDSWRGPPPLFQQHRFERSVGAEPLLPWNRMIQNQNAAFQPNQYQMLGGPGGYPPRRDDHRGGRQGYPREGRKYPLPPPSGRYSWN</sequence>
<feature type="chain" id="PRO_0000071397" description="5'-3' exoribonuclease 2">
    <location>
        <begin position="1"/>
        <end position="951"/>
    </location>
</feature>
<feature type="zinc finger region" description="CCHC-type">
    <location>
        <begin position="262"/>
        <end position="278"/>
    </location>
</feature>
<feature type="region of interest" description="Disordered" evidence="2">
    <location>
        <begin position="408"/>
        <end position="508"/>
    </location>
</feature>
<feature type="region of interest" description="Disordered" evidence="2">
    <location>
        <begin position="907"/>
        <end position="951"/>
    </location>
</feature>
<feature type="compositionally biased region" description="Basic residues" evidence="2">
    <location>
        <begin position="416"/>
        <end position="426"/>
    </location>
</feature>
<feature type="compositionally biased region" description="Polar residues" evidence="2">
    <location>
        <begin position="445"/>
        <end position="458"/>
    </location>
</feature>
<feature type="compositionally biased region" description="Polar residues" evidence="2">
    <location>
        <begin position="467"/>
        <end position="485"/>
    </location>
</feature>
<feature type="compositionally biased region" description="Basic and acidic residues" evidence="2">
    <location>
        <begin position="920"/>
        <end position="938"/>
    </location>
</feature>
<feature type="modified residue" description="N6-acetyllysine" evidence="10">
    <location>
        <position position="286"/>
    </location>
</feature>
<feature type="modified residue" description="Phosphothreonine" evidence="1">
    <location>
        <position position="439"/>
    </location>
</feature>
<feature type="modified residue" description="Phosphoserine" evidence="6 8 9">
    <location>
        <position position="448"/>
    </location>
</feature>
<feature type="modified residue" description="Phosphoserine" evidence="9">
    <location>
        <position position="471"/>
    </location>
</feature>
<feature type="modified residue" description="Phosphoserine" evidence="1">
    <location>
        <position position="473"/>
    </location>
</feature>
<feature type="modified residue" description="Phosphoserine" evidence="9">
    <location>
        <position position="475"/>
    </location>
</feature>
<feature type="modified residue" description="Phosphoserine" evidence="9">
    <location>
        <position position="482"/>
    </location>
</feature>
<feature type="modified residue" description="Phosphoserine" evidence="9">
    <location>
        <position position="487"/>
    </location>
</feature>
<feature type="modified residue" description="Phosphoserine" evidence="6 7 8 9">
    <location>
        <position position="499"/>
    </location>
</feature>
<feature type="modified residue" description="Phosphoserine" evidence="7 8">
    <location>
        <position position="501"/>
    </location>
</feature>
<feature type="modified residue" description="Phosphoserine" evidence="9">
    <location>
        <position position="678"/>
    </location>
</feature>
<feature type="modified residue" description="Asymmetric dimethylarginine; alternate" evidence="1">
    <location>
        <position position="824"/>
    </location>
</feature>
<feature type="modified residue" description="Omega-N-methylarginine; alternate" evidence="1">
    <location>
        <position position="824"/>
    </location>
</feature>
<feature type="modified residue" description="Asymmetric dimethylarginine; alternate" evidence="11">
    <location>
        <position position="847"/>
    </location>
</feature>
<feature type="modified residue" description="Omega-N-methylarginine; alternate" evidence="1">
    <location>
        <position position="847"/>
    </location>
</feature>
<feature type="modified residue" description="Asymmetric dimethylarginine; alternate" evidence="1">
    <location>
        <position position="851"/>
    </location>
</feature>
<feature type="modified residue" description="Omega-N-methylarginine; alternate" evidence="1">
    <location>
        <position position="851"/>
    </location>
</feature>
<feature type="modified residue" description="Asymmetric dimethylarginine" evidence="11">
    <location>
        <position position="880"/>
    </location>
</feature>
<feature type="modified residue" description="Asymmetric dimethylarginine; alternate" evidence="11">
    <location>
        <position position="883"/>
    </location>
</feature>
<feature type="modified residue" description="Omega-N-methylarginine; alternate" evidence="1">
    <location>
        <position position="883"/>
    </location>
</feature>
<feature type="modified residue" description="Omega-N-methylarginine" evidence="11">
    <location>
        <position position="895"/>
    </location>
</feature>
<feature type="modified residue" description="Asymmetric dimethylarginine; alternate" evidence="11">
    <location>
        <position position="947"/>
    </location>
</feature>
<feature type="modified residue" description="Omega-N-methylarginine; alternate" evidence="1">
    <location>
        <position position="947"/>
    </location>
</feature>
<feature type="splice variant" id="VSP_007235" description="In isoform 2." evidence="4">
    <original>GYPREGRKYPLPPPSGRYSWN</original>
    <variation>VISTMWAVEGKQHTAHC</variation>
    <location>
        <begin position="931"/>
        <end position="951"/>
    </location>
</feature>
<feature type="sequence conflict" description="In Ref. 1; BAA07524." evidence="5" ref="1">
    <original>SKE</original>
    <variation>IKG</variation>
    <location>
        <begin position="122"/>
        <end position="124"/>
    </location>
</feature>
<feature type="sequence conflict" description="In Ref. 1; BAA07524." evidence="5" ref="1">
    <original>H</original>
    <variation>Q</variation>
    <location>
        <position position="221"/>
    </location>
</feature>
<feature type="sequence conflict" description="In Ref. 2; BAE40020." evidence="5" ref="2">
    <original>L</original>
    <variation>P</variation>
    <location>
        <position position="306"/>
    </location>
</feature>
<feature type="sequence conflict" description="In Ref. 1; BAA07524." evidence="5" ref="1">
    <original>I</original>
    <variation>N</variation>
    <location>
        <position position="332"/>
    </location>
</feature>
<feature type="sequence conflict" description="In Ref. 1; BAA07524." evidence="5" ref="1">
    <original>V</original>
    <variation>E</variation>
    <location>
        <position position="336"/>
    </location>
</feature>
<feature type="sequence conflict" description="In Ref. 2; BAE40020." evidence="5" ref="2">
    <original>P</original>
    <variation>H</variation>
    <location>
        <position position="440"/>
    </location>
</feature>
<feature type="sequence conflict" description="In Ref. 2; BAE40020." evidence="5" ref="2">
    <original>P</original>
    <variation>Q</variation>
    <location>
        <position position="449"/>
    </location>
</feature>
<feature type="sequence conflict" description="In Ref. 1; BAA07524." evidence="5" ref="1">
    <original>K</original>
    <variation>R</variation>
    <location>
        <position position="493"/>
    </location>
</feature>
<feature type="sequence conflict" description="In Ref. 1; BAA07524." evidence="5" ref="1">
    <original>Y</original>
    <variation>L</variation>
    <location>
        <position position="563"/>
    </location>
</feature>
<feature type="sequence conflict" description="In Ref. 2; BAC27318." evidence="5" ref="2">
    <original>P</original>
    <variation>H</variation>
    <location>
        <position position="712"/>
    </location>
</feature>
<feature type="sequence conflict" description="In Ref. 2; BAC27318." evidence="5" ref="2">
    <original>T</original>
    <variation>K</variation>
    <location>
        <position position="734"/>
    </location>
</feature>
<feature type="sequence conflict" description="In Ref. 1; BAA07524." evidence="5" ref="1">
    <original>P</original>
    <variation>L</variation>
    <location>
        <position position="837"/>
    </location>
</feature>
<feature type="sequence conflict" description="In Ref. 1; BAA07524." evidence="5" ref="1">
    <original>Q</original>
    <variation>K</variation>
    <location>
        <position position="866"/>
    </location>
</feature>
<feature type="sequence conflict" description="In Ref. 2; BAC27318." evidence="5" ref="2">
    <original>P</original>
    <variation>H</variation>
    <location>
        <position position="889"/>
    </location>
</feature>
<feature type="sequence conflict" description="In Ref. 2; BAE40020." evidence="5" ref="2">
    <original>D</original>
    <variation>G</variation>
    <location>
        <position position="923"/>
    </location>
</feature>
<feature type="sequence conflict" description="In Ref. 2; BAC27318." evidence="5" ref="2">
    <original>Q</original>
    <variation>QV</variation>
    <location>
        <position position="930"/>
    </location>
</feature>
<keyword id="KW-0007">Acetylation</keyword>
<keyword id="KW-0025">Alternative splicing</keyword>
<keyword id="KW-0238">DNA-binding</keyword>
<keyword id="KW-0269">Exonuclease</keyword>
<keyword id="KW-0378">Hydrolase</keyword>
<keyword id="KW-0479">Metal-binding</keyword>
<keyword id="KW-0488">Methylation</keyword>
<keyword id="KW-0507">mRNA processing</keyword>
<keyword id="KW-0540">Nuclease</keyword>
<keyword id="KW-0539">Nucleus</keyword>
<keyword id="KW-0597">Phosphoprotein</keyword>
<keyword id="KW-1185">Reference proteome</keyword>
<keyword id="KW-0804">Transcription</keyword>
<keyword id="KW-0805">Transcription regulation</keyword>
<keyword id="KW-0806">Transcription termination</keyword>
<keyword id="KW-0862">Zinc</keyword>
<keyword id="KW-0863">Zinc-finger</keyword>
<dbReference type="EC" id="3.1.13.-"/>
<dbReference type="EMBL" id="D38517">
    <property type="protein sequence ID" value="BAA07524.1"/>
    <property type="molecule type" value="mRNA"/>
</dbReference>
<dbReference type="EMBL" id="AK004800">
    <property type="protein sequence ID" value="BAB23573.1"/>
    <property type="molecule type" value="mRNA"/>
</dbReference>
<dbReference type="EMBL" id="AK031247">
    <property type="protein sequence ID" value="BAC27318.1"/>
    <property type="molecule type" value="mRNA"/>
</dbReference>
<dbReference type="EMBL" id="AK053643">
    <property type="protein sequence ID" value="BAC35458.1"/>
    <property type="molecule type" value="mRNA"/>
</dbReference>
<dbReference type="EMBL" id="AK133654">
    <property type="protein sequence ID" value="BAE21766.1"/>
    <property type="molecule type" value="mRNA"/>
</dbReference>
<dbReference type="EMBL" id="AK167019">
    <property type="protein sequence ID" value="BAE39193.1"/>
    <property type="molecule type" value="mRNA"/>
</dbReference>
<dbReference type="EMBL" id="AK168037">
    <property type="protein sequence ID" value="BAE40020.1"/>
    <property type="molecule type" value="mRNA"/>
</dbReference>
<dbReference type="EMBL" id="BC004028">
    <property type="protein sequence ID" value="AAH04028.1"/>
    <property type="status" value="ALT_INIT"/>
    <property type="molecule type" value="mRNA"/>
</dbReference>
<dbReference type="EMBL" id="BC054743">
    <property type="protein sequence ID" value="AAH54743.1"/>
    <property type="molecule type" value="mRNA"/>
</dbReference>
<dbReference type="CCDS" id="CCDS38258.1">
    <molecule id="Q9DBR1-1"/>
</dbReference>
<dbReference type="PIR" id="I49635">
    <property type="entry name" value="I49635"/>
</dbReference>
<dbReference type="RefSeq" id="NP_036047.2">
    <molecule id="Q9DBR1-1"/>
    <property type="nucleotide sequence ID" value="NM_011917.3"/>
</dbReference>
<dbReference type="SMR" id="Q9DBR1"/>
<dbReference type="BioGRID" id="204910">
    <property type="interactions" value="22"/>
</dbReference>
<dbReference type="FunCoup" id="Q9DBR1">
    <property type="interactions" value="4953"/>
</dbReference>
<dbReference type="IntAct" id="Q9DBR1">
    <property type="interactions" value="2"/>
</dbReference>
<dbReference type="STRING" id="10090.ENSMUSP00000028921"/>
<dbReference type="GlyGen" id="Q9DBR1">
    <property type="glycosylation" value="1 site, 1 O-linked glycan (1 site)"/>
</dbReference>
<dbReference type="iPTMnet" id="Q9DBR1"/>
<dbReference type="PhosphoSitePlus" id="Q9DBR1"/>
<dbReference type="SwissPalm" id="Q9DBR1"/>
<dbReference type="jPOST" id="Q9DBR1"/>
<dbReference type="PaxDb" id="10090-ENSMUSP00000028921"/>
<dbReference type="PeptideAtlas" id="Q9DBR1"/>
<dbReference type="ProteomicsDB" id="299725">
    <molecule id="Q9DBR1-1"/>
</dbReference>
<dbReference type="ProteomicsDB" id="299726">
    <molecule id="Q9DBR1-2"/>
</dbReference>
<dbReference type="Pumba" id="Q9DBR1"/>
<dbReference type="Antibodypedia" id="24812">
    <property type="antibodies" value="190 antibodies from 28 providers"/>
</dbReference>
<dbReference type="DNASU" id="24128"/>
<dbReference type="Ensembl" id="ENSMUST00000028921.6">
    <molecule id="Q9DBR1-1"/>
    <property type="protein sequence ID" value="ENSMUSP00000028921.6"/>
    <property type="gene ID" value="ENSMUSG00000027433.6"/>
</dbReference>
<dbReference type="GeneID" id="24128"/>
<dbReference type="KEGG" id="mmu:24128"/>
<dbReference type="UCSC" id="uc008msq.1">
    <molecule id="Q9DBR1-2"/>
    <property type="organism name" value="mouse"/>
</dbReference>
<dbReference type="UCSC" id="uc008msr.1">
    <molecule id="Q9DBR1-1"/>
    <property type="organism name" value="mouse"/>
</dbReference>
<dbReference type="AGR" id="MGI:894687"/>
<dbReference type="CTD" id="22803"/>
<dbReference type="MGI" id="MGI:894687">
    <property type="gene designation" value="Xrn2"/>
</dbReference>
<dbReference type="VEuPathDB" id="HostDB:ENSMUSG00000027433"/>
<dbReference type="eggNOG" id="KOG2044">
    <property type="taxonomic scope" value="Eukaryota"/>
</dbReference>
<dbReference type="GeneTree" id="ENSGT00670000098098"/>
<dbReference type="HOGENOM" id="CLU_006038_1_2_1"/>
<dbReference type="InParanoid" id="Q9DBR1"/>
<dbReference type="OMA" id="ITHDMVV"/>
<dbReference type="OrthoDB" id="372487at2759"/>
<dbReference type="PhylomeDB" id="Q9DBR1"/>
<dbReference type="TreeFam" id="TF105977"/>
<dbReference type="Reactome" id="R-MMU-6791226">
    <property type="pathway name" value="Major pathway of rRNA processing in the nucleolus and cytosol"/>
</dbReference>
<dbReference type="BioGRID-ORCS" id="24128">
    <property type="hits" value="24 hits in 112 CRISPR screens"/>
</dbReference>
<dbReference type="ChiTaRS" id="Xrn2">
    <property type="organism name" value="mouse"/>
</dbReference>
<dbReference type="PRO" id="PR:Q9DBR1"/>
<dbReference type="Proteomes" id="UP000000589">
    <property type="component" value="Chromosome 2"/>
</dbReference>
<dbReference type="RNAct" id="Q9DBR1">
    <property type="molecule type" value="protein"/>
</dbReference>
<dbReference type="Bgee" id="ENSMUSG00000027433">
    <property type="expression patterns" value="Expressed in ectoplacental cone and 248 other cell types or tissues"/>
</dbReference>
<dbReference type="GO" id="GO:0016235">
    <property type="term" value="C:aggresome"/>
    <property type="evidence" value="ECO:0007669"/>
    <property type="project" value="Ensembl"/>
</dbReference>
<dbReference type="GO" id="GO:0005730">
    <property type="term" value="C:nucleolus"/>
    <property type="evidence" value="ECO:0000250"/>
    <property type="project" value="UniProtKB"/>
</dbReference>
<dbReference type="GO" id="GO:0005654">
    <property type="term" value="C:nucleoplasm"/>
    <property type="evidence" value="ECO:0007669"/>
    <property type="project" value="Ensembl"/>
</dbReference>
<dbReference type="GO" id="GO:0008409">
    <property type="term" value="F:5'-3' exonuclease activity"/>
    <property type="evidence" value="ECO:0000250"/>
    <property type="project" value="UniProtKB"/>
</dbReference>
<dbReference type="GO" id="GO:0004534">
    <property type="term" value="F:5'-3' RNA exonuclease activity"/>
    <property type="evidence" value="ECO:0000303"/>
    <property type="project" value="UniProtKB"/>
</dbReference>
<dbReference type="GO" id="GO:0042802">
    <property type="term" value="F:identical protein binding"/>
    <property type="evidence" value="ECO:0007669"/>
    <property type="project" value="Ensembl"/>
</dbReference>
<dbReference type="GO" id="GO:0001147">
    <property type="term" value="F:transcription termination site sequence-specific DNA binding"/>
    <property type="evidence" value="ECO:0000250"/>
    <property type="project" value="UniProtKB"/>
</dbReference>
<dbReference type="GO" id="GO:0008270">
    <property type="term" value="F:zinc ion binding"/>
    <property type="evidence" value="ECO:0007669"/>
    <property type="project" value="UniProtKB-KW"/>
</dbReference>
<dbReference type="GO" id="GO:0006310">
    <property type="term" value="P:DNA recombination"/>
    <property type="evidence" value="ECO:0000303"/>
    <property type="project" value="UniProtKB"/>
</dbReference>
<dbReference type="GO" id="GO:0006281">
    <property type="term" value="P:DNA repair"/>
    <property type="evidence" value="ECO:0000303"/>
    <property type="project" value="UniProtKB"/>
</dbReference>
<dbReference type="GO" id="GO:0021766">
    <property type="term" value="P:hippocampus development"/>
    <property type="evidence" value="ECO:0007669"/>
    <property type="project" value="Ensembl"/>
</dbReference>
<dbReference type="GO" id="GO:0007017">
    <property type="term" value="P:microtubule-based process"/>
    <property type="evidence" value="ECO:0000304"/>
    <property type="project" value="UniProtKB"/>
</dbReference>
<dbReference type="GO" id="GO:0006397">
    <property type="term" value="P:mRNA processing"/>
    <property type="evidence" value="ECO:0007669"/>
    <property type="project" value="UniProtKB-KW"/>
</dbReference>
<dbReference type="GO" id="GO:0030182">
    <property type="term" value="P:neuron differentiation"/>
    <property type="evidence" value="ECO:0007669"/>
    <property type="project" value="Ensembl"/>
</dbReference>
<dbReference type="GO" id="GO:0060041">
    <property type="term" value="P:retina development in camera-type eye"/>
    <property type="evidence" value="ECO:0007669"/>
    <property type="project" value="Ensembl"/>
</dbReference>
<dbReference type="GO" id="GO:0016070">
    <property type="term" value="P:RNA metabolic process"/>
    <property type="evidence" value="ECO:0000316"/>
    <property type="project" value="UniProtKB"/>
</dbReference>
<dbReference type="GO" id="GO:0007283">
    <property type="term" value="P:spermatogenesis"/>
    <property type="evidence" value="ECO:0000270"/>
    <property type="project" value="UniProtKB"/>
</dbReference>
<dbReference type="GO" id="GO:0006369">
    <property type="term" value="P:termination of RNA polymerase II transcription"/>
    <property type="evidence" value="ECO:0000250"/>
    <property type="project" value="UniProtKB"/>
</dbReference>
<dbReference type="CDD" id="cd18673">
    <property type="entry name" value="PIN_XRN1-2-like"/>
    <property type="match status" value="1"/>
</dbReference>
<dbReference type="FunFam" id="1.25.40.1050:FF:000002">
    <property type="entry name" value="5'-3' exoribonuclease"/>
    <property type="match status" value="1"/>
</dbReference>
<dbReference type="FunFam" id="3.40.50.12390:FF:000001">
    <property type="entry name" value="5'-3' exoribonuclease"/>
    <property type="match status" value="1"/>
</dbReference>
<dbReference type="FunFam" id="3.40.50.12390:FF:000003">
    <property type="entry name" value="5'-3' exoribonuclease"/>
    <property type="match status" value="1"/>
</dbReference>
<dbReference type="Gene3D" id="1.25.40.1050">
    <property type="match status" value="1"/>
</dbReference>
<dbReference type="Gene3D" id="3.40.50.12390">
    <property type="match status" value="2"/>
</dbReference>
<dbReference type="InterPro" id="IPR027073">
    <property type="entry name" value="5_3_exoribonuclease"/>
</dbReference>
<dbReference type="InterPro" id="IPR041412">
    <property type="entry name" value="Xrn1_helical"/>
</dbReference>
<dbReference type="InterPro" id="IPR004859">
    <property type="entry name" value="Xrn1_N"/>
</dbReference>
<dbReference type="InterPro" id="IPR017151">
    <property type="entry name" value="Xrn2/3/4"/>
</dbReference>
<dbReference type="PANTHER" id="PTHR12341:SF41">
    <property type="entry name" value="5'-3' EXORIBONUCLEASE 2"/>
    <property type="match status" value="1"/>
</dbReference>
<dbReference type="PANTHER" id="PTHR12341">
    <property type="entry name" value="5'-&gt;3' EXORIBONUCLEASE"/>
    <property type="match status" value="1"/>
</dbReference>
<dbReference type="Pfam" id="PF17846">
    <property type="entry name" value="XRN_M"/>
    <property type="match status" value="1"/>
</dbReference>
<dbReference type="Pfam" id="PF03159">
    <property type="entry name" value="XRN_N"/>
    <property type="match status" value="1"/>
</dbReference>
<dbReference type="PIRSF" id="PIRSF037239">
    <property type="entry name" value="Exonuclease_Xrn2"/>
    <property type="match status" value="1"/>
</dbReference>
<comment type="function">
    <text evidence="1">Possesses 5'-&gt;3' exoribonuclease activity. May promote the termination of transcription by RNA polymerase II. During transcription termination, cleavage at the polyadenylation site liberates a 5' fragment which is subsequently processed to form the mature mRNA and a 3' fragment which remains attached to the elongating polymerase. The processive degradation of this 3' fragment by this protein may promote termination of transcription. Binds to RNA polymerase II (RNAp II) transcription termination R-loops formed by G-rich pause sites (By similarity).</text>
</comment>
<comment type="subunit">
    <text evidence="1">Interacts with POLR2A and SMN1/SMN2. Interacts with CDKN2AIP and NKRF. Interacts with CDKN2AIPNL; the interaction is direct. Interacts with TRIM71 (via NHL repeats) in an RNA-dependent manner (By similarity). Interacts with DHX34; the interaction is RNA-independent (By similarity).</text>
</comment>
<comment type="subcellular location">
    <subcellularLocation>
        <location evidence="1">Nucleus</location>
        <location evidence="1">Nucleolus</location>
    </subcellularLocation>
</comment>
<comment type="alternative products">
    <event type="alternative splicing"/>
    <isoform>
        <id>Q9DBR1-1</id>
        <name>1</name>
        <sequence type="displayed"/>
    </isoform>
    <isoform>
        <id>Q9DBR1-2</id>
        <name>2</name>
        <sequence type="described" ref="VSP_007235"/>
    </isoform>
</comment>
<comment type="tissue specificity">
    <text evidence="3">Expressed in the spleen, testis, heart, brain, lung, liver, skeletal muscle, and kidney.</text>
</comment>
<comment type="miscellaneous">
    <molecule>Isoform 2</molecule>
    <text evidence="5">May result from the retention of an intron in the cDNA.</text>
</comment>
<comment type="similarity">
    <text evidence="5">Belongs to the 5'-3' exonuclease family. XRN2/RAT1 subfamily.</text>
</comment>
<comment type="sequence caution" evidence="5">
    <conflict type="erroneous initiation">
        <sequence resource="EMBL-CDS" id="AAH04028"/>
    </conflict>
    <text>Truncated N-terminus.</text>
</comment>
<proteinExistence type="evidence at protein level"/>
<evidence type="ECO:0000250" key="1">
    <source>
        <dbReference type="UniProtKB" id="Q9H0D6"/>
    </source>
</evidence>
<evidence type="ECO:0000256" key="2">
    <source>
        <dbReference type="SAM" id="MobiDB-lite"/>
    </source>
</evidence>
<evidence type="ECO:0000269" key="3">
    <source>
    </source>
</evidence>
<evidence type="ECO:0000303" key="4">
    <source>
    </source>
</evidence>
<evidence type="ECO:0000305" key="5"/>
<evidence type="ECO:0007744" key="6">
    <source>
    </source>
</evidence>
<evidence type="ECO:0007744" key="7">
    <source>
    </source>
</evidence>
<evidence type="ECO:0007744" key="8">
    <source>
    </source>
</evidence>
<evidence type="ECO:0007744" key="9">
    <source>
    </source>
</evidence>
<evidence type="ECO:0007744" key="10">
    <source>
    </source>
</evidence>
<evidence type="ECO:0007744" key="11">
    <source>
    </source>
</evidence>
<name>XRN2_MOUSE</name>
<protein>
    <recommendedName>
        <fullName>5'-3' exoribonuclease 2</fullName>
        <ecNumber>3.1.13.-</ecNumber>
    </recommendedName>
    <alternativeName>
        <fullName>Protein Dhm1</fullName>
    </alternativeName>
</protein>
<organism>
    <name type="scientific">Mus musculus</name>
    <name type="common">Mouse</name>
    <dbReference type="NCBI Taxonomy" id="10090"/>
    <lineage>
        <taxon>Eukaryota</taxon>
        <taxon>Metazoa</taxon>
        <taxon>Chordata</taxon>
        <taxon>Craniata</taxon>
        <taxon>Vertebrata</taxon>
        <taxon>Euteleostomi</taxon>
        <taxon>Mammalia</taxon>
        <taxon>Eutheria</taxon>
        <taxon>Euarchontoglires</taxon>
        <taxon>Glires</taxon>
        <taxon>Rodentia</taxon>
        <taxon>Myomorpha</taxon>
        <taxon>Muroidea</taxon>
        <taxon>Muridae</taxon>
        <taxon>Murinae</taxon>
        <taxon>Mus</taxon>
        <taxon>Mus</taxon>
    </lineage>
</organism>
<gene>
    <name type="primary">Xrn2</name>
    <name type="synonym">Dhm1</name>
</gene>